<reference key="1">
    <citation type="journal article" date="2005" name="Infect. Immun.">
        <title>Whole-genome analyses of speciation events in pathogenic Brucellae.</title>
        <authorList>
            <person name="Chain P.S."/>
            <person name="Comerci D.J."/>
            <person name="Tolmasky M.E."/>
            <person name="Larimer F.W."/>
            <person name="Malfatti S.A."/>
            <person name="Vergez L.M."/>
            <person name="Aguero F."/>
            <person name="Land M.L."/>
            <person name="Ugalde R.A."/>
            <person name="Garcia E."/>
        </authorList>
    </citation>
    <scope>NUCLEOTIDE SEQUENCE [LARGE SCALE GENOMIC DNA]</scope>
    <source>
        <strain>2308</strain>
    </source>
</reference>
<reference key="2">
    <citation type="journal article" date="2010" name="Vaccine">
        <title>Inactivation of formyltransferase (wbkC) gene generates a Brucella abortus rough strain that is attenuated in macrophages and in mice.</title>
        <authorList>
            <person name="Lacerda T.L."/>
            <person name="Cardoso P.G."/>
            <person name="Augusto de Almeida L."/>
            <person name="Camargo I.L."/>
            <person name="Afonso D.A."/>
            <person name="Trant C.C."/>
            <person name="Macedo G.C."/>
            <person name="Campos E."/>
            <person name="Cravero S.L."/>
            <person name="Salcedo S.P."/>
            <person name="Gorvel J.P."/>
            <person name="Oliveira S.C."/>
        </authorList>
    </citation>
    <scope>FUNCTION</scope>
    <scope>PATHWAY</scope>
    <scope>DISRUPTION PHENOTYPE</scope>
    <source>
        <strain>2308</strain>
    </source>
</reference>
<organism>
    <name type="scientific">Brucella abortus (strain 2308)</name>
    <dbReference type="NCBI Taxonomy" id="359391"/>
    <lineage>
        <taxon>Bacteria</taxon>
        <taxon>Pseudomonadati</taxon>
        <taxon>Pseudomonadota</taxon>
        <taxon>Alphaproteobacteria</taxon>
        <taxon>Hyphomicrobiales</taxon>
        <taxon>Brucellaceae</taxon>
        <taxon>Brucella/Ochrobactrum group</taxon>
        <taxon>Brucella</taxon>
    </lineage>
</organism>
<name>WBKC_BRUA2</name>
<feature type="chain" id="PRO_0000455051" description="GDP-perosamine N-formyltransferase">
    <location>
        <begin position="1"/>
        <end position="259"/>
    </location>
</feature>
<feature type="binding site" evidence="1">
    <location>
        <begin position="89"/>
        <end position="91"/>
    </location>
    <ligand>
        <name>(6S)-5,6,7,8-tetrahydrofolate</name>
        <dbReference type="ChEBI" id="CHEBI:57453"/>
    </ligand>
</feature>
<feature type="binding site" evidence="1">
    <location>
        <begin position="139"/>
        <end position="143"/>
    </location>
    <ligand>
        <name>(6S)-5,6,7,8-tetrahydrofolate</name>
        <dbReference type="ChEBI" id="CHEBI:57453"/>
    </ligand>
</feature>
<accession>Q2YML4</accession>
<keyword id="KW-0448">Lipopolysaccharide biosynthesis</keyword>
<keyword id="KW-1185">Reference proteome</keyword>
<keyword id="KW-0808">Transferase</keyword>
<proteinExistence type="inferred from homology"/>
<evidence type="ECO:0000250" key="1">
    <source>
        <dbReference type="UniProtKB" id="F8WJP6"/>
    </source>
</evidence>
<evidence type="ECO:0000269" key="2">
    <source>
    </source>
</evidence>
<evidence type="ECO:0000303" key="3">
    <source>
    </source>
</evidence>
<evidence type="ECO:0000305" key="4"/>
<evidence type="ECO:0000312" key="5">
    <source>
        <dbReference type="EMBL" id="CAJ10496.1"/>
    </source>
</evidence>
<protein>
    <recommendedName>
        <fullName evidence="1">GDP-perosamine N-formyltransferase</fullName>
        <ecNumber evidence="1">2.1.2.14</ecNumber>
    </recommendedName>
</protein>
<comment type="function">
    <text evidence="1 2">Involved in the lipopolysaccharide (LPS) O-antigen biosynthesis (PubMed:20580469). Catalyzes the transfer of a formyl group to GDP-perosamine, leading to the formation of GDP-N-formylperosamine (By similarity). Is critical for full bacterial virulence (PubMed:20580469).</text>
</comment>
<comment type="catalytic activity">
    <reaction evidence="1">
        <text>GDP-alpha-D-perosamine + (6R)-10-formyltetrahydrofolate = GDP-N-formyl-alpha-D-perosamine + (6S)-5,6,7,8-tetrahydrofolate + H(+)</text>
        <dbReference type="Rhea" id="RHEA:68588"/>
        <dbReference type="ChEBI" id="CHEBI:15378"/>
        <dbReference type="ChEBI" id="CHEBI:57453"/>
        <dbReference type="ChEBI" id="CHEBI:73996"/>
        <dbReference type="ChEBI" id="CHEBI:176524"/>
        <dbReference type="ChEBI" id="CHEBI:195366"/>
        <dbReference type="EC" id="2.1.2.14"/>
    </reaction>
    <physiologicalReaction direction="left-to-right" evidence="1">
        <dbReference type="Rhea" id="RHEA:68589"/>
    </physiologicalReaction>
</comment>
<comment type="pathway">
    <text evidence="2">Bacterial outer membrane biogenesis; lipopolysaccharide biosynthesis.</text>
</comment>
<comment type="subunit">
    <text evidence="1">Homodimer.</text>
</comment>
<comment type="disruption phenotype">
    <text evidence="2">Disruption mutant lacks lipopolysaccharide O-side chain. In vivo, mutants are attenuated in C57BL/6 and IRF-1 knockout mice. In bone marrow-derived macrophages (BMDM), mutants are attenuated, cannot reach a replicative niche and induce higher levels of IL-12 and TNF-alpha when compared to parental smooth strains.</text>
</comment>
<comment type="similarity">
    <text evidence="4">Belongs to the Fmt family.</text>
</comment>
<sequence>MAIAPNTRVLVAGYGLPAEFCVTTLIGMGVEIDKIAVATHREDNRNCGLHSMLRLRNIQFTTAAANSEEFYEFGANFDPDMIISMHYRSLIPGRFLKLAKKGSVNLHPSLLPAYRGTNSVAWVIINGESETGFSYHRMDENFDTGAILLQERISVEETDTAFSLFHRQIARAMLRLEEVILKLDQGDPGFAQLGEASYYARELPFGGVIDPRWSEVQIDRFIRAMFFPPFPPAVLKIDGKVYYVPSIDIYRSLMRGIPS</sequence>
<dbReference type="EC" id="2.1.2.14" evidence="1"/>
<dbReference type="EMBL" id="AM040264">
    <property type="protein sequence ID" value="CAJ10496.1"/>
    <property type="molecule type" value="Genomic_DNA"/>
</dbReference>
<dbReference type="RefSeq" id="WP_002963675.1">
    <property type="nucleotide sequence ID" value="NZ_KN046823.1"/>
</dbReference>
<dbReference type="SMR" id="Q2YML4"/>
<dbReference type="STRING" id="359391.BAB1_0540"/>
<dbReference type="GeneID" id="97534122"/>
<dbReference type="KEGG" id="bmf:BAB1_0540"/>
<dbReference type="PATRIC" id="fig|359391.11.peg.2578"/>
<dbReference type="HOGENOM" id="CLU_033347_2_0_5"/>
<dbReference type="UniPathway" id="UPA00030"/>
<dbReference type="Proteomes" id="UP000002719">
    <property type="component" value="Chromosome I"/>
</dbReference>
<dbReference type="GO" id="GO:0005829">
    <property type="term" value="C:cytosol"/>
    <property type="evidence" value="ECO:0007669"/>
    <property type="project" value="TreeGrafter"/>
</dbReference>
<dbReference type="GO" id="GO:0008446">
    <property type="term" value="F:GDP-mannose 4,6-dehydratase activity"/>
    <property type="evidence" value="ECO:0007669"/>
    <property type="project" value="UniProtKB-EC"/>
</dbReference>
<dbReference type="GO" id="GO:0004479">
    <property type="term" value="F:methionyl-tRNA formyltransferase activity"/>
    <property type="evidence" value="ECO:0007669"/>
    <property type="project" value="TreeGrafter"/>
</dbReference>
<dbReference type="GO" id="GO:0009103">
    <property type="term" value="P:lipopolysaccharide biosynthetic process"/>
    <property type="evidence" value="ECO:0007669"/>
    <property type="project" value="UniProtKB-UniPathway"/>
</dbReference>
<dbReference type="CDD" id="cd08369">
    <property type="entry name" value="FMT_core"/>
    <property type="match status" value="1"/>
</dbReference>
<dbReference type="Gene3D" id="3.40.50.12230">
    <property type="match status" value="1"/>
</dbReference>
<dbReference type="InterPro" id="IPR002376">
    <property type="entry name" value="Formyl_transf_N"/>
</dbReference>
<dbReference type="InterPro" id="IPR036477">
    <property type="entry name" value="Formyl_transf_N_sf"/>
</dbReference>
<dbReference type="PANTHER" id="PTHR11138">
    <property type="entry name" value="METHIONYL-TRNA FORMYLTRANSFERASE"/>
    <property type="match status" value="1"/>
</dbReference>
<dbReference type="PANTHER" id="PTHR11138:SF5">
    <property type="entry name" value="METHIONYL-TRNA FORMYLTRANSFERASE, MITOCHONDRIAL"/>
    <property type="match status" value="1"/>
</dbReference>
<dbReference type="Pfam" id="PF00551">
    <property type="entry name" value="Formyl_trans_N"/>
    <property type="match status" value="1"/>
</dbReference>
<dbReference type="SUPFAM" id="SSF53328">
    <property type="entry name" value="Formyltransferase"/>
    <property type="match status" value="1"/>
</dbReference>
<gene>
    <name evidence="3" type="primary">wbkC</name>
    <name evidence="5" type="ordered locus">BAB1_0540</name>
</gene>